<reference key="1">
    <citation type="journal article" date="2018" name="Nat. Commun.">
        <title>PhiCrAss001 represents the most abundant bacteriophage family in the human gut and infects Bacteroides intestinalis.</title>
        <authorList>
            <person name="Shkoporov A.N."/>
            <person name="Khokhlova E.V."/>
            <person name="Fitzgerald C.B."/>
            <person name="Stockdale S.R."/>
            <person name="Draper L.A."/>
            <person name="Ross R.P."/>
            <person name="Hill C."/>
        </authorList>
    </citation>
    <scope>NUCLEOTIDE SEQUENCE [LARGE SCALE GENOMIC DNA]</scope>
</reference>
<reference key="2">
    <citation type="journal article" date="2023" name="Nature">
        <title>Structural atlas of a human gut crassvirus.</title>
        <authorList>
            <person name="Bayfield O.W."/>
            <person name="Shkoporov A.N."/>
            <person name="Yutin N."/>
            <person name="Khokhlova E.V."/>
            <person name="Smith J.L.R."/>
            <person name="Hawkins D.E.D.P."/>
            <person name="Koonin E.V."/>
            <person name="Hill C."/>
            <person name="Antson A.A."/>
        </authorList>
    </citation>
    <scope>SUBCELLULAR LOCATION</scope>
    <scope>FUNCTION</scope>
    <scope>SUBUNIT</scope>
</reference>
<keyword id="KW-0002">3D-structure</keyword>
<keyword id="KW-1185">Reference proteome</keyword>
<keyword id="KW-1227">Viral tail protein</keyword>
<keyword id="KW-0946">Virion</keyword>
<proteinExistence type="evidence at protein level"/>
<protein>
    <recommendedName>
        <fullName evidence="3">Muzzle protein</fullName>
    </recommendedName>
    <alternativeName>
        <fullName evidence="2">Gene product 44</fullName>
        <shortName evidence="2">gp44</shortName>
    </alternativeName>
</protein>
<evidence type="ECO:0000269" key="1">
    <source>
    </source>
</evidence>
<evidence type="ECO:0000303" key="2">
    <source>
    </source>
</evidence>
<evidence type="ECO:0000303" key="3">
    <source>
    </source>
</evidence>
<evidence type="ECO:0000312" key="4">
    <source>
        <dbReference type="EMBL" id="AXQ62687.1"/>
    </source>
</evidence>
<evidence type="ECO:0007829" key="5">
    <source>
        <dbReference type="PDB" id="7QOK"/>
    </source>
</evidence>
<evidence type="ECO:0007829" key="6">
    <source>
        <dbReference type="PDB" id="7QOL"/>
    </source>
</evidence>
<organismHost>
    <name type="scientific">Bacteroides intestinalis</name>
    <dbReference type="NCBI Taxonomy" id="329854"/>
</organismHost>
<organism>
    <name type="scientific">Bacteroides phage crAss001</name>
    <name type="common">Bacteroides phage PhiCrAss001</name>
    <dbReference type="NCBI Taxonomy" id="2301731"/>
    <lineage>
        <taxon>Viruses</taxon>
        <taxon>Duplodnaviria</taxon>
        <taxon>Heunggongvirae</taxon>
        <taxon>Uroviricota</taxon>
        <taxon>Caudoviricetes</taxon>
        <taxon>Crassvirales</taxon>
        <taxon>Steigviridae</taxon>
        <taxon>Asinivirinae</taxon>
        <taxon>Kehishuvirus</taxon>
        <taxon>Kehishuvirus primarius</taxon>
    </lineage>
</organism>
<comment type="function">
    <text evidence="1">Forms the muzzle assembly at the distal part of the tail. May serve as the gatekeeper to control the ejection of the cargo proteins.</text>
</comment>
<comment type="subunit">
    <text evidence="1">Homohexamer.</text>
</comment>
<comment type="subcellular location">
    <subcellularLocation>
        <location evidence="1">Virion</location>
    </subcellularLocation>
    <text evidence="1">Localizes at the distal end of the viral tail.</text>
</comment>
<accession>A0A385DVD6</accession>
<name>MUZZL_BPCA1</name>
<gene>
    <name evidence="4" type="ORF">crAss001_44</name>
</gene>
<dbReference type="EMBL" id="MH675552">
    <property type="protein sequence ID" value="AXQ62687.1"/>
    <property type="molecule type" value="Genomic_DNA"/>
</dbReference>
<dbReference type="PDB" id="7QOK">
    <property type="method" value="EM"/>
    <property type="resolution" value="3.38 A"/>
    <property type="chains" value="A=1-1371"/>
</dbReference>
<dbReference type="PDB" id="7QOL">
    <property type="method" value="EM"/>
    <property type="resolution" value="3.33 A"/>
    <property type="chains" value="P=1-1371"/>
</dbReference>
<dbReference type="PDB" id="8CKB">
    <property type="method" value="EM"/>
    <property type="resolution" value="4.39 A"/>
    <property type="chains" value="F001/F002/F003/F004/F005/F006=1-1371"/>
</dbReference>
<dbReference type="PDBsum" id="7QOK"/>
<dbReference type="PDBsum" id="7QOL"/>
<dbReference type="PDBsum" id="8CKB"/>
<dbReference type="EMDB" id="EMD-14093"/>
<dbReference type="EMDB" id="EMD-14094"/>
<dbReference type="SMR" id="A0A385DVD6"/>
<dbReference type="Proteomes" id="UP000262320">
    <property type="component" value="Genome"/>
</dbReference>
<dbReference type="GO" id="GO:0098015">
    <property type="term" value="C:virus tail"/>
    <property type="evidence" value="ECO:0007669"/>
    <property type="project" value="UniProtKB-KW"/>
</dbReference>
<sequence>MALKKEQHFFKGMQRDLSVSKFNPEYAFDAQNIRITAREHDTLLSVSNEKGNKEIPLQSPSGDPVVIDGVLLGQNVLNNYVTLFTKGTNDNIYRLENKGTYFETLILFSGNLNFSTDYPIESISVYENNNIQKVYWVDGLNQARVINITKDDYNNADDFDFVGTIHTSSKIEVSKVNGSGAFGQGVIQYAFTYYNKYGKETNIFRTSPLLYIAYSDRGASPEETVSCSFQINFTELDSSYDFIRVYSIHRTSIDATPTVRKVADLATDTKLYVDTGTTGEIVDPTLLLYVGGEEIAPYTMTQKDNTLFLGNYTLKRSLISTELKNQIKSDSIVTTILGGLDDAIESEWNVNTQYNSNYDLNYDSRIKGFQKGEIYRLGIQFQDNKGKWSEVVFIGDYECTERFKYTQYDTYGITLIPRFKVVISNSTTIQAIKNLGYINARGVVVFPTLEDRNILCQGILCPTVANYKDRLDNSPFVQSSWFSRPKQATETWKTEYSGTNHLSEFGEVPYFQHNEPIGSASLSEITRWEIQTSLGLVPYYNPSTTNAKDFVDGSPSEFLVDENIVTMHSPDVEFDDRLQNITNGKFKLRIIGTTHLTNTLSDISVITSTPTYGNYATGFYKGKVANMNISTSYYGGRQLSAGLFWSDNVKFQDPSPQDKLERLWMVYPWHRNGSLMNMGVPTEGTRAAALQRKIISNLKFASQNNYLPNQSVWEAEISGDANHTGITPVNSWTEGLVRIPAQANSNLGSLNYYANIDKVLTFNRSEQISEIYKNGYLIYTTKDWITDGKIADLFNNAISQTISVDQVQDWLTRIADTDKYGTEPVSMKYKSNPHLVFAFNYTESGKQLILPMKNNNNGYLAPSANSKPFWNPTAPEGAVYQDSINFTNENRAFFWLAELYRDSVVNRFGGDTEEAILNNTWLPSGDSVIIGDSINIEYTEGDTYYQRYDCLRTFAYTNEDQNSIVDIVSFMCESKVNIDGRYDKNRGQVNNLAVSPTNFNLFNPVYSQKNNFFTFRTIDYERFSINYFPNSITVTKEKSLGEDIDTWTNITLATTLDLDGDKGEIVSLNTYNNEIFCFQRRGLSNILFNSRVQIPTSDGMPIEITNGLKVSGKRYISNTIGCANKWSIAESPSGLYFIDNETNSLYLFNGEIVSLSDKLGFRQWISTHNVHVNWEPVGYNNYRSFYDKNNNDVYFTYKDHCLCYSELINQFTSFMSYEGVPAMFNVSSEFYAFKDGKMWEQFAGDYNMFFGEYKPFSITFVANAEEPNDKIFNTVEFRADSWDSDNLISNKTFDTLDVWNEYQHGTTPLTNLLGHPSPLKKKFRIWRANIPRAIANNRDRIRNTWAYIKLGMNTPNTYRTEFHDAIIHYFA</sequence>
<feature type="chain" id="PRO_0000458036" description="Muzzle protein">
    <location>
        <begin position="1"/>
        <end position="1371"/>
    </location>
</feature>
<feature type="strand" evidence="5">
    <location>
        <begin position="4"/>
        <end position="8"/>
    </location>
</feature>
<feature type="strand" evidence="6">
    <location>
        <begin position="11"/>
        <end position="13"/>
    </location>
</feature>
<feature type="helix" evidence="6">
    <location>
        <begin position="19"/>
        <end position="21"/>
    </location>
</feature>
<feature type="strand" evidence="6">
    <location>
        <begin position="26"/>
        <end position="34"/>
    </location>
</feature>
<feature type="strand" evidence="6">
    <location>
        <begin position="39"/>
        <end position="41"/>
    </location>
</feature>
<feature type="strand" evidence="6">
    <location>
        <begin position="45"/>
        <end position="48"/>
    </location>
</feature>
<feature type="strand" evidence="6">
    <location>
        <begin position="53"/>
        <end position="55"/>
    </location>
</feature>
<feature type="strand" evidence="6">
    <location>
        <begin position="71"/>
        <end position="73"/>
    </location>
</feature>
<feature type="strand" evidence="6">
    <location>
        <begin position="76"/>
        <end position="85"/>
    </location>
</feature>
<feature type="strand" evidence="6">
    <location>
        <begin position="87"/>
        <end position="97"/>
    </location>
</feature>
<feature type="strand" evidence="6">
    <location>
        <begin position="99"/>
        <end position="110"/>
    </location>
</feature>
<feature type="strand" evidence="6">
    <location>
        <begin position="121"/>
        <end position="126"/>
    </location>
</feature>
<feature type="strand" evidence="6">
    <location>
        <begin position="128"/>
        <end position="130"/>
    </location>
</feature>
<feature type="strand" evidence="6">
    <location>
        <begin position="132"/>
        <end position="137"/>
    </location>
</feature>
<feature type="strand" evidence="6">
    <location>
        <begin position="139"/>
        <end position="141"/>
    </location>
</feature>
<feature type="strand" evidence="5">
    <location>
        <begin position="144"/>
        <end position="147"/>
    </location>
</feature>
<feature type="helix" evidence="6">
    <location>
        <begin position="156"/>
        <end position="159"/>
    </location>
</feature>
<feature type="strand" evidence="6">
    <location>
        <begin position="160"/>
        <end position="162"/>
    </location>
</feature>
<feature type="strand" evidence="6">
    <location>
        <begin position="172"/>
        <end position="194"/>
    </location>
</feature>
<feature type="strand" evidence="6">
    <location>
        <begin position="210"/>
        <end position="212"/>
    </location>
</feature>
<feature type="strand" evidence="6">
    <location>
        <begin position="215"/>
        <end position="217"/>
    </location>
</feature>
<feature type="strand" evidence="6">
    <location>
        <begin position="224"/>
        <end position="232"/>
    </location>
</feature>
<feature type="strand" evidence="6">
    <location>
        <begin position="240"/>
        <end position="254"/>
    </location>
</feature>
<feature type="strand" evidence="6">
    <location>
        <begin position="260"/>
        <end position="266"/>
    </location>
</feature>
<feature type="strand" evidence="6">
    <location>
        <begin position="272"/>
        <end position="277"/>
    </location>
</feature>
<feature type="helix" evidence="6">
    <location>
        <begin position="284"/>
        <end position="287"/>
    </location>
</feature>
<feature type="strand" evidence="6">
    <location>
        <begin position="288"/>
        <end position="291"/>
    </location>
</feature>
<feature type="strand" evidence="6">
    <location>
        <begin position="298"/>
        <end position="303"/>
    </location>
</feature>
<feature type="strand" evidence="6">
    <location>
        <begin position="306"/>
        <end position="314"/>
    </location>
</feature>
<feature type="helix" evidence="6">
    <location>
        <begin position="321"/>
        <end position="329"/>
    </location>
</feature>
<feature type="strand" evidence="6">
    <location>
        <begin position="332"/>
        <end position="338"/>
    </location>
</feature>
<feature type="strand" evidence="6">
    <location>
        <begin position="350"/>
        <end position="353"/>
    </location>
</feature>
<feature type="strand" evidence="5">
    <location>
        <begin position="360"/>
        <end position="363"/>
    </location>
</feature>
<feature type="helix" evidence="6">
    <location>
        <begin position="364"/>
        <end position="366"/>
    </location>
</feature>
<feature type="strand" evidence="6">
    <location>
        <begin position="374"/>
        <end position="382"/>
    </location>
</feature>
<feature type="strand" evidence="6">
    <location>
        <begin position="384"/>
        <end position="386"/>
    </location>
</feature>
<feature type="strand" evidence="6">
    <location>
        <begin position="395"/>
        <end position="398"/>
    </location>
</feature>
<feature type="strand" evidence="6">
    <location>
        <begin position="404"/>
        <end position="407"/>
    </location>
</feature>
<feature type="strand" evidence="6">
    <location>
        <begin position="412"/>
        <end position="423"/>
    </location>
</feature>
<feature type="helix" evidence="6">
    <location>
        <begin position="426"/>
        <end position="434"/>
    </location>
</feature>
<feature type="strand" evidence="6">
    <location>
        <begin position="439"/>
        <end position="445"/>
    </location>
</feature>
<feature type="turn" evidence="6">
    <location>
        <begin position="449"/>
        <end position="451"/>
    </location>
</feature>
<feature type="strand" evidence="6">
    <location>
        <begin position="453"/>
        <end position="466"/>
    </location>
</feature>
<feature type="helix" evidence="6">
    <location>
        <begin position="467"/>
        <end position="472"/>
    </location>
</feature>
<feature type="strand" evidence="6">
    <location>
        <begin position="474"/>
        <end position="479"/>
    </location>
</feature>
<feature type="strand" evidence="6">
    <location>
        <begin position="488"/>
        <end position="490"/>
    </location>
</feature>
<feature type="helix" evidence="6">
    <location>
        <begin position="491"/>
        <end position="495"/>
    </location>
</feature>
<feature type="helix" evidence="6">
    <location>
        <begin position="503"/>
        <end position="505"/>
    </location>
</feature>
<feature type="strand" evidence="6">
    <location>
        <begin position="512"/>
        <end position="514"/>
    </location>
</feature>
<feature type="helix" evidence="6">
    <location>
        <begin position="522"/>
        <end position="527"/>
    </location>
</feature>
<feature type="strand" evidence="6">
    <location>
        <begin position="538"/>
        <end position="540"/>
    </location>
</feature>
<feature type="turn" evidence="6">
    <location>
        <begin position="542"/>
        <end position="544"/>
    </location>
</feature>
<feature type="helix" evidence="6">
    <location>
        <begin position="547"/>
        <end position="552"/>
    </location>
</feature>
<feature type="strand" evidence="6">
    <location>
        <begin position="558"/>
        <end position="568"/>
    </location>
</feature>
<feature type="helix" evidence="6">
    <location>
        <begin position="570"/>
        <end position="574"/>
    </location>
</feature>
<feature type="helix" evidence="6">
    <location>
        <begin position="576"/>
        <end position="580"/>
    </location>
</feature>
<feature type="strand" evidence="6">
    <location>
        <begin position="582"/>
        <end position="584"/>
    </location>
</feature>
<feature type="strand" evidence="6">
    <location>
        <begin position="587"/>
        <end position="592"/>
    </location>
</feature>
<feature type="strand" evidence="6">
    <location>
        <begin position="595"/>
        <end position="609"/>
    </location>
</feature>
<feature type="helix" evidence="5">
    <location>
        <begin position="632"/>
        <end position="634"/>
    </location>
</feature>
<feature type="strand" evidence="6">
    <location>
        <begin position="642"/>
        <end position="647"/>
    </location>
</feature>
<feature type="strand" evidence="6">
    <location>
        <begin position="662"/>
        <end position="666"/>
    </location>
</feature>
<feature type="strand" evidence="6">
    <location>
        <begin position="671"/>
        <end position="677"/>
    </location>
</feature>
<feature type="strand" evidence="6">
    <location>
        <begin position="682"/>
        <end position="685"/>
    </location>
</feature>
<feature type="strand" evidence="6">
    <location>
        <begin position="687"/>
        <end position="703"/>
    </location>
</feature>
<feature type="turn" evidence="5">
    <location>
        <begin position="709"/>
        <end position="711"/>
    </location>
</feature>
<feature type="strand" evidence="6">
    <location>
        <begin position="713"/>
        <end position="715"/>
    </location>
</feature>
<feature type="strand" evidence="6">
    <location>
        <begin position="729"/>
        <end position="735"/>
    </location>
</feature>
<feature type="strand" evidence="6">
    <location>
        <begin position="737"/>
        <end position="739"/>
    </location>
</feature>
<feature type="strand" evidence="6">
    <location>
        <begin position="750"/>
        <end position="760"/>
    </location>
</feature>
<feature type="strand" evidence="6">
    <location>
        <begin position="766"/>
        <end position="768"/>
    </location>
</feature>
<feature type="helix" evidence="6">
    <location>
        <begin position="770"/>
        <end position="773"/>
    </location>
</feature>
<feature type="strand" evidence="6">
    <location>
        <begin position="786"/>
        <end position="788"/>
    </location>
</feature>
<feature type="helix" evidence="6">
    <location>
        <begin position="790"/>
        <end position="795"/>
    </location>
</feature>
<feature type="turn" evidence="6">
    <location>
        <begin position="796"/>
        <end position="799"/>
    </location>
</feature>
<feature type="turn" evidence="6">
    <location>
        <begin position="804"/>
        <end position="806"/>
    </location>
</feature>
<feature type="helix" evidence="6">
    <location>
        <begin position="808"/>
        <end position="810"/>
    </location>
</feature>
<feature type="turn" evidence="6">
    <location>
        <begin position="811"/>
        <end position="813"/>
    </location>
</feature>
<feature type="helix" evidence="6">
    <location>
        <begin position="816"/>
        <end position="818"/>
    </location>
</feature>
<feature type="strand" evidence="5">
    <location>
        <begin position="819"/>
        <end position="821"/>
    </location>
</feature>
<feature type="strand" evidence="6">
    <location>
        <begin position="825"/>
        <end position="831"/>
    </location>
</feature>
<feature type="strand" evidence="6">
    <location>
        <begin position="834"/>
        <end position="839"/>
    </location>
</feature>
<feature type="strand" evidence="5">
    <location>
        <begin position="847"/>
        <end position="853"/>
    </location>
</feature>
<feature type="strand" evidence="5">
    <location>
        <begin position="879"/>
        <end position="884"/>
    </location>
</feature>
<feature type="strand" evidence="6">
    <location>
        <begin position="896"/>
        <end position="900"/>
    </location>
</feature>
<feature type="helix" evidence="6">
    <location>
        <begin position="913"/>
        <end position="917"/>
    </location>
</feature>
<feature type="strand" evidence="6">
    <location>
        <begin position="921"/>
        <end position="929"/>
    </location>
</feature>
<feature type="strand" evidence="6">
    <location>
        <begin position="931"/>
        <end position="937"/>
    </location>
</feature>
<feature type="strand" evidence="6">
    <location>
        <begin position="942"/>
        <end position="954"/>
    </location>
</feature>
<feature type="strand" evidence="6">
    <location>
        <begin position="961"/>
        <end position="976"/>
    </location>
</feature>
<feature type="helix" evidence="6">
    <location>
        <begin position="978"/>
        <end position="980"/>
    </location>
</feature>
<feature type="turn" evidence="6">
    <location>
        <begin position="996"/>
        <end position="998"/>
    </location>
</feature>
<feature type="helix" evidence="6">
    <location>
        <begin position="1004"/>
        <end position="1006"/>
    </location>
</feature>
<feature type="strand" evidence="6">
    <location>
        <begin position="1020"/>
        <end position="1022"/>
    </location>
</feature>
<feature type="strand" evidence="6">
    <location>
        <begin position="1027"/>
        <end position="1034"/>
    </location>
</feature>
<feature type="strand" evidence="6">
    <location>
        <begin position="1041"/>
        <end position="1043"/>
    </location>
</feature>
<feature type="turn" evidence="6">
    <location>
        <begin position="1046"/>
        <end position="1048"/>
    </location>
</feature>
<feature type="turn" evidence="6">
    <location>
        <begin position="1060"/>
        <end position="1062"/>
    </location>
</feature>
<feature type="strand" evidence="6">
    <location>
        <begin position="1064"/>
        <end position="1070"/>
    </location>
</feature>
<feature type="strand" evidence="6">
    <location>
        <begin position="1075"/>
        <end position="1079"/>
    </location>
</feature>
<feature type="strand" evidence="6">
    <location>
        <begin position="1082"/>
        <end position="1088"/>
    </location>
</feature>
<feature type="strand" evidence="6">
    <location>
        <begin position="1110"/>
        <end position="1119"/>
    </location>
</feature>
<feature type="helix" evidence="6">
    <location>
        <begin position="1125"/>
        <end position="1127"/>
    </location>
</feature>
<feature type="strand" evidence="6">
    <location>
        <begin position="1135"/>
        <end position="1139"/>
    </location>
</feature>
<feature type="turn" evidence="6">
    <location>
        <begin position="1140"/>
        <end position="1143"/>
    </location>
</feature>
<feature type="strand" evidence="6">
    <location>
        <begin position="1144"/>
        <end position="1154"/>
    </location>
</feature>
<feature type="helix" evidence="6">
    <location>
        <begin position="1155"/>
        <end position="1158"/>
    </location>
</feature>
<feature type="helix" evidence="6">
    <location>
        <begin position="1162"/>
        <end position="1166"/>
    </location>
</feature>
<feature type="strand" evidence="6">
    <location>
        <begin position="1176"/>
        <end position="1178"/>
    </location>
</feature>
<feature type="strand" evidence="6">
    <location>
        <begin position="1183"/>
        <end position="1187"/>
    </location>
</feature>
<feature type="turn" evidence="6">
    <location>
        <begin position="1188"/>
        <end position="1191"/>
    </location>
</feature>
<feature type="strand" evidence="6">
    <location>
        <begin position="1192"/>
        <end position="1196"/>
    </location>
</feature>
<feature type="strand" evidence="6">
    <location>
        <begin position="1201"/>
        <end position="1205"/>
    </location>
</feature>
<feature type="turn" evidence="6">
    <location>
        <begin position="1206"/>
        <end position="1209"/>
    </location>
</feature>
<feature type="strand" evidence="6">
    <location>
        <begin position="1210"/>
        <end position="1216"/>
    </location>
</feature>
<feature type="strand" evidence="6">
    <location>
        <begin position="1221"/>
        <end position="1226"/>
    </location>
</feature>
<feature type="strand" evidence="6">
    <location>
        <begin position="1229"/>
        <end position="1234"/>
    </location>
</feature>
<feature type="strand" evidence="6">
    <location>
        <begin position="1237"/>
        <end position="1240"/>
    </location>
</feature>
<feature type="strand" evidence="6">
    <location>
        <begin position="1256"/>
        <end position="1262"/>
    </location>
</feature>
<feature type="strand" evidence="6">
    <location>
        <begin position="1270"/>
        <end position="1285"/>
    </location>
</feature>
<feature type="strand" evidence="6">
    <location>
        <begin position="1287"/>
        <end position="1290"/>
    </location>
</feature>
<feature type="strand" evidence="6">
    <location>
        <begin position="1294"/>
        <end position="1300"/>
    </location>
</feature>
<feature type="strand" evidence="6">
    <location>
        <begin position="1303"/>
        <end position="1307"/>
    </location>
</feature>
<feature type="strand" evidence="6">
    <location>
        <begin position="1313"/>
        <end position="1315"/>
    </location>
</feature>
<feature type="strand" evidence="6">
    <location>
        <begin position="1318"/>
        <end position="1322"/>
    </location>
</feature>
<feature type="strand" evidence="6">
    <location>
        <begin position="1325"/>
        <end position="1329"/>
    </location>
</feature>
<feature type="turn" evidence="6">
    <location>
        <begin position="1334"/>
        <end position="1336"/>
    </location>
</feature>
<feature type="strand" evidence="6">
    <location>
        <begin position="1340"/>
        <end position="1344"/>
    </location>
</feature>
<feature type="strand" evidence="6">
    <location>
        <begin position="1346"/>
        <end position="1352"/>
    </location>
</feature>
<feature type="strand" evidence="6">
    <location>
        <begin position="1359"/>
        <end position="1370"/>
    </location>
</feature>